<proteinExistence type="inferred from homology"/>
<comment type="function">
    <text evidence="1">Bifunctional enzyme with both catalase and broad-spectrum peroxidase activity.</text>
</comment>
<comment type="catalytic activity">
    <reaction evidence="1">
        <text>H2O2 + AH2 = A + 2 H2O</text>
        <dbReference type="Rhea" id="RHEA:30275"/>
        <dbReference type="ChEBI" id="CHEBI:13193"/>
        <dbReference type="ChEBI" id="CHEBI:15377"/>
        <dbReference type="ChEBI" id="CHEBI:16240"/>
        <dbReference type="ChEBI" id="CHEBI:17499"/>
        <dbReference type="EC" id="1.11.1.21"/>
    </reaction>
</comment>
<comment type="catalytic activity">
    <reaction evidence="1">
        <text>2 H2O2 = O2 + 2 H2O</text>
        <dbReference type="Rhea" id="RHEA:20309"/>
        <dbReference type="ChEBI" id="CHEBI:15377"/>
        <dbReference type="ChEBI" id="CHEBI:15379"/>
        <dbReference type="ChEBI" id="CHEBI:16240"/>
        <dbReference type="EC" id="1.11.1.21"/>
    </reaction>
</comment>
<comment type="cofactor">
    <cofactor evidence="1">
        <name>heme b</name>
        <dbReference type="ChEBI" id="CHEBI:60344"/>
    </cofactor>
    <text evidence="1">Binds 1 heme b (iron(II)-protoporphyrin IX) group per dimer.</text>
</comment>
<comment type="subunit">
    <text evidence="1">Homodimer or homotetramer.</text>
</comment>
<comment type="PTM">
    <text evidence="1">Formation of the three residue Trp-Tyr-Met cross-link is important for the catalase, but not the peroxidase activity of the enzyme.</text>
</comment>
<comment type="similarity">
    <text evidence="1">Belongs to the peroxidase family. Peroxidase/catalase subfamily.</text>
</comment>
<comment type="caution">
    <text evidence="2">Differs from other KatG proteins because it has a much longer N-terminus.</text>
</comment>
<keyword id="KW-0349">Heme</keyword>
<keyword id="KW-0376">Hydrogen peroxide</keyword>
<keyword id="KW-0408">Iron</keyword>
<keyword id="KW-0479">Metal-binding</keyword>
<keyword id="KW-0560">Oxidoreductase</keyword>
<keyword id="KW-0575">Peroxidase</keyword>
<keyword id="KW-1185">Reference proteome</keyword>
<gene>
    <name evidence="1" type="primary">katG</name>
    <name type="ordered locus">RB3010</name>
</gene>
<dbReference type="EC" id="1.11.1.21" evidence="1"/>
<dbReference type="EMBL" id="BX294138">
    <property type="protein sequence ID" value="CAD72958.1"/>
    <property type="molecule type" value="Genomic_DNA"/>
</dbReference>
<dbReference type="RefSeq" id="NP_865274.1">
    <property type="nucleotide sequence ID" value="NC_005027.1"/>
</dbReference>
<dbReference type="RefSeq" id="WP_011119144.1">
    <property type="nucleotide sequence ID" value="NC_005027.1"/>
</dbReference>
<dbReference type="SMR" id="Q7UUW9"/>
<dbReference type="FunCoup" id="Q7UUW9">
    <property type="interactions" value="228"/>
</dbReference>
<dbReference type="STRING" id="243090.RB3010"/>
<dbReference type="PeroxiBase" id="2389">
    <property type="entry name" value="RbaCP01_SH1"/>
</dbReference>
<dbReference type="EnsemblBacteria" id="CAD72958">
    <property type="protein sequence ID" value="CAD72958"/>
    <property type="gene ID" value="RB3010"/>
</dbReference>
<dbReference type="KEGG" id="rba:RB3010"/>
<dbReference type="PATRIC" id="fig|243090.15.peg.1394"/>
<dbReference type="eggNOG" id="COG0376">
    <property type="taxonomic scope" value="Bacteria"/>
</dbReference>
<dbReference type="HOGENOM" id="CLU_025424_2_0_0"/>
<dbReference type="InParanoid" id="Q7UUW9"/>
<dbReference type="OrthoDB" id="9759743at2"/>
<dbReference type="Proteomes" id="UP000001025">
    <property type="component" value="Chromosome"/>
</dbReference>
<dbReference type="GO" id="GO:0005829">
    <property type="term" value="C:cytosol"/>
    <property type="evidence" value="ECO:0000318"/>
    <property type="project" value="GO_Central"/>
</dbReference>
<dbReference type="GO" id="GO:0004096">
    <property type="term" value="F:catalase activity"/>
    <property type="evidence" value="ECO:0000318"/>
    <property type="project" value="GO_Central"/>
</dbReference>
<dbReference type="GO" id="GO:0020037">
    <property type="term" value="F:heme binding"/>
    <property type="evidence" value="ECO:0000318"/>
    <property type="project" value="GO_Central"/>
</dbReference>
<dbReference type="GO" id="GO:0046872">
    <property type="term" value="F:metal ion binding"/>
    <property type="evidence" value="ECO:0007669"/>
    <property type="project" value="UniProtKB-KW"/>
</dbReference>
<dbReference type="GO" id="GO:0070301">
    <property type="term" value="P:cellular response to hydrogen peroxide"/>
    <property type="evidence" value="ECO:0000318"/>
    <property type="project" value="GO_Central"/>
</dbReference>
<dbReference type="GO" id="GO:0042744">
    <property type="term" value="P:hydrogen peroxide catabolic process"/>
    <property type="evidence" value="ECO:0000318"/>
    <property type="project" value="GO_Central"/>
</dbReference>
<dbReference type="CDD" id="cd00649">
    <property type="entry name" value="catalase_peroxidase_1"/>
    <property type="match status" value="1"/>
</dbReference>
<dbReference type="CDD" id="cd08200">
    <property type="entry name" value="catalase_peroxidase_2"/>
    <property type="match status" value="1"/>
</dbReference>
<dbReference type="FunFam" id="1.10.420.10:FF:000002">
    <property type="entry name" value="Catalase-peroxidase"/>
    <property type="match status" value="1"/>
</dbReference>
<dbReference type="FunFam" id="1.10.420.10:FF:000004">
    <property type="entry name" value="Catalase-peroxidase"/>
    <property type="match status" value="1"/>
</dbReference>
<dbReference type="FunFam" id="1.10.520.10:FF:000002">
    <property type="entry name" value="Catalase-peroxidase"/>
    <property type="match status" value="1"/>
</dbReference>
<dbReference type="Gene3D" id="1.10.520.10">
    <property type="match status" value="2"/>
</dbReference>
<dbReference type="Gene3D" id="1.10.420.10">
    <property type="entry name" value="Peroxidase, domain 2"/>
    <property type="match status" value="2"/>
</dbReference>
<dbReference type="HAMAP" id="MF_01961">
    <property type="entry name" value="Catal_peroxid"/>
    <property type="match status" value="1"/>
</dbReference>
<dbReference type="InterPro" id="IPR000763">
    <property type="entry name" value="Catalase_peroxidase"/>
</dbReference>
<dbReference type="InterPro" id="IPR002016">
    <property type="entry name" value="Haem_peroxidase"/>
</dbReference>
<dbReference type="InterPro" id="IPR010255">
    <property type="entry name" value="Haem_peroxidase_sf"/>
</dbReference>
<dbReference type="InterPro" id="IPR019794">
    <property type="entry name" value="Peroxidases_AS"/>
</dbReference>
<dbReference type="InterPro" id="IPR019793">
    <property type="entry name" value="Peroxidases_heam-ligand_BS"/>
</dbReference>
<dbReference type="NCBIfam" id="TIGR00198">
    <property type="entry name" value="cat_per_HPI"/>
    <property type="match status" value="1"/>
</dbReference>
<dbReference type="NCBIfam" id="NF011635">
    <property type="entry name" value="PRK15061.1"/>
    <property type="match status" value="1"/>
</dbReference>
<dbReference type="PANTHER" id="PTHR30555:SF0">
    <property type="entry name" value="CATALASE-PEROXIDASE"/>
    <property type="match status" value="1"/>
</dbReference>
<dbReference type="PANTHER" id="PTHR30555">
    <property type="entry name" value="HYDROPEROXIDASE I, BIFUNCTIONAL CATALASE-PEROXIDASE"/>
    <property type="match status" value="1"/>
</dbReference>
<dbReference type="Pfam" id="PF00141">
    <property type="entry name" value="peroxidase"/>
    <property type="match status" value="2"/>
</dbReference>
<dbReference type="PRINTS" id="PR00460">
    <property type="entry name" value="BPEROXIDASE"/>
</dbReference>
<dbReference type="PRINTS" id="PR00458">
    <property type="entry name" value="PEROXIDASE"/>
</dbReference>
<dbReference type="SUPFAM" id="SSF48113">
    <property type="entry name" value="Heme-dependent peroxidases"/>
    <property type="match status" value="2"/>
</dbReference>
<dbReference type="PROSITE" id="PS00435">
    <property type="entry name" value="PEROXIDASE_1"/>
    <property type="match status" value="1"/>
</dbReference>
<dbReference type="PROSITE" id="PS00436">
    <property type="entry name" value="PEROXIDASE_2"/>
    <property type="match status" value="1"/>
</dbReference>
<dbReference type="PROSITE" id="PS50873">
    <property type="entry name" value="PEROXIDASE_4"/>
    <property type="match status" value="1"/>
</dbReference>
<sequence length="857" mass="93632">MRLVHGKDAVNALDVSWLSPILVRDPTSPSESAWDLFATFMRTRTMKSTATNMNQHPTTAQICRRFATRLFRGTVSIRPLTLTLGCLAASASASLVAQETATNAAASQADAISKCPVMGNPAGPNRHTVSGAMGNGDWWPNQLNLDMLHQNSVKSNPMGEDFDYAAAFNSLDLAAVKADIKELMNTSQDWWPSDYGHYGPLFIRMAWHSAGTYRVSDGRGGASDGTQRFAPLNSWPDNANLDKARRLLWPIKQKYGSKISWADLMVLTGNCALEDMGFETFGFAGGREDVWEPQKDVYWGPETEWLGDKRYSGDRDLQNPLAAVQMGLIYVNPEGPNGKPDPIAAAKDIRETFGRMAMNDEETVALIAGGHTFGKAHGAASPDGNMGVEPEGEGLAAQGLGWINTHGTGNAGDTITSGLEGAWTSTPAEWSHGYFENLFGYEWKLVKSPAGAWQWTPTDENAKGTVPDAHDASKSHAPMMFTTDLALRMDPEYGKISRRFHDNPEQFEKAFAKAWYKLTHRDMGPVSRLLGDSVPEPQLWQDPIPEATFDVIGSKEIEQLKQKILATNLTSSQLVSTAWASASTFRNSDMRGGANGARIRLAPQKDWEVNEPAELASVLTTLEGVQKEFNASRKDGKQVSMADLIVLGGCAGVEAAAMKAGHAIQVPFTPGRTDATQEMTDVESFEPLKPIADGFRNYQGHNADRPAEEMLVDKANLLSLTAPEMTVLVGGMRALDTNAGAGPLADLGKLTKRPGALTNDFFVNLLDMNTVWKQSPMCEHFFEGRDRESGNLKWTASRVDLVFGSNSQLRGIAEVYASEDAKEKFVKDFVNAWTKVMNLDRFDVNDSESTETQVAAK</sequence>
<name>KATG_RHOBA</name>
<protein>
    <recommendedName>
        <fullName evidence="1">Catalase-peroxidase</fullName>
        <shortName evidence="1">CP</shortName>
        <ecNumber evidence="1">1.11.1.21</ecNumber>
    </recommendedName>
    <alternativeName>
        <fullName evidence="1">Peroxidase/catalase</fullName>
    </alternativeName>
</protein>
<organism>
    <name type="scientific">Rhodopirellula baltica (strain DSM 10527 / NCIMB 13988 / SH1)</name>
    <dbReference type="NCBI Taxonomy" id="243090"/>
    <lineage>
        <taxon>Bacteria</taxon>
        <taxon>Pseudomonadati</taxon>
        <taxon>Planctomycetota</taxon>
        <taxon>Planctomycetia</taxon>
        <taxon>Pirellulales</taxon>
        <taxon>Pirellulaceae</taxon>
        <taxon>Rhodopirellula</taxon>
    </lineage>
</organism>
<accession>Q7UUW9</accession>
<feature type="chain" id="PRO_0000354891" description="Catalase-peroxidase">
    <location>
        <begin position="1"/>
        <end position="857"/>
    </location>
</feature>
<feature type="active site" description="Proton acceptor" evidence="1">
    <location>
        <position position="208"/>
    </location>
</feature>
<feature type="binding site" description="axial binding residue" evidence="1">
    <location>
        <position position="371"/>
    </location>
    <ligand>
        <name>heme b</name>
        <dbReference type="ChEBI" id="CHEBI:60344"/>
    </ligand>
    <ligandPart>
        <name>Fe</name>
        <dbReference type="ChEBI" id="CHEBI:18248"/>
    </ligandPart>
</feature>
<feature type="site" description="Transition state stabilizer" evidence="1">
    <location>
        <position position="204"/>
    </location>
</feature>
<feature type="cross-link" description="Tryptophyl-tyrosyl-methioninium (Trp-Tyr) (with M-356)" evidence="1">
    <location>
        <begin position="207"/>
        <end position="330"/>
    </location>
</feature>
<feature type="cross-link" description="Tryptophyl-tyrosyl-methioninium (Tyr-Met) (with W-207)" evidence="1">
    <location>
        <begin position="330"/>
        <end position="356"/>
    </location>
</feature>
<reference key="1">
    <citation type="journal article" date="2003" name="Proc. Natl. Acad. Sci. U.S.A.">
        <title>Complete genome sequence of the marine planctomycete Pirellula sp. strain 1.</title>
        <authorList>
            <person name="Gloeckner F.O."/>
            <person name="Kube M."/>
            <person name="Bauer M."/>
            <person name="Teeling H."/>
            <person name="Lombardot T."/>
            <person name="Ludwig W."/>
            <person name="Gade D."/>
            <person name="Beck A."/>
            <person name="Borzym K."/>
            <person name="Heitmann K."/>
            <person name="Rabus R."/>
            <person name="Schlesner H."/>
            <person name="Amann R."/>
            <person name="Reinhardt R."/>
        </authorList>
    </citation>
    <scope>NUCLEOTIDE SEQUENCE [LARGE SCALE GENOMIC DNA]</scope>
    <source>
        <strain>DSM 10527 / NCIMB 13988 / SH1</strain>
    </source>
</reference>
<evidence type="ECO:0000255" key="1">
    <source>
        <dbReference type="HAMAP-Rule" id="MF_01961"/>
    </source>
</evidence>
<evidence type="ECO:0000305" key="2"/>